<evidence type="ECO:0000255" key="1">
    <source>
        <dbReference type="HAMAP-Rule" id="MF_00736"/>
    </source>
</evidence>
<evidence type="ECO:0000305" key="2"/>
<accession>Q0ANN9</accession>
<comment type="function">
    <text evidence="1">Forms part of the ribosomal stalk which helps the ribosome interact with GTP-bound translation factors.</text>
</comment>
<comment type="subunit">
    <text evidence="1">Part of the ribosomal stalk of the 50S ribosomal subunit. Interacts with L10 and the large rRNA to form the base of the stalk. L10 forms an elongated spine to which L12 dimers bind in a sequential fashion forming a multimeric L10(L12)X complex.</text>
</comment>
<comment type="PTM">
    <text evidence="1">One or more lysine residues are methylated.</text>
</comment>
<comment type="similarity">
    <text evidence="1">Belongs to the universal ribosomal protein uL11 family.</text>
</comment>
<name>RL11_MARMM</name>
<protein>
    <recommendedName>
        <fullName evidence="1">Large ribosomal subunit protein uL11</fullName>
    </recommendedName>
    <alternativeName>
        <fullName evidence="2">50S ribosomal protein L11</fullName>
    </alternativeName>
</protein>
<organism>
    <name type="scientific">Maricaulis maris (strain MCS10)</name>
    <name type="common">Caulobacter maris</name>
    <dbReference type="NCBI Taxonomy" id="394221"/>
    <lineage>
        <taxon>Bacteria</taxon>
        <taxon>Pseudomonadati</taxon>
        <taxon>Pseudomonadota</taxon>
        <taxon>Alphaproteobacteria</taxon>
        <taxon>Maricaulales</taxon>
        <taxon>Maricaulaceae</taxon>
        <taxon>Maricaulis</taxon>
    </lineage>
</organism>
<sequence>MAKKIAGYIKLQVPAGAANPSPPIGPALGQRGVNIMEFCKAFNAKTQEMEKGMPIPTTITVFSDKSFTFAIATPPASFFLKKAAKIAKGSSTPSQTTAGTVSMAQCREIAEAKFNDLNANDLDQATKIIAGSARSMGLQVTE</sequence>
<feature type="chain" id="PRO_1000046208" description="Large ribosomal subunit protein uL11">
    <location>
        <begin position="1"/>
        <end position="142"/>
    </location>
</feature>
<reference key="1">
    <citation type="submission" date="2006-08" db="EMBL/GenBank/DDBJ databases">
        <title>Complete sequence of Maricaulis maris MCS10.</title>
        <authorList>
            <consortium name="US DOE Joint Genome Institute"/>
            <person name="Copeland A."/>
            <person name="Lucas S."/>
            <person name="Lapidus A."/>
            <person name="Barry K."/>
            <person name="Detter J.C."/>
            <person name="Glavina del Rio T."/>
            <person name="Hammon N."/>
            <person name="Israni S."/>
            <person name="Dalin E."/>
            <person name="Tice H."/>
            <person name="Pitluck S."/>
            <person name="Saunders E."/>
            <person name="Brettin T."/>
            <person name="Bruce D."/>
            <person name="Han C."/>
            <person name="Tapia R."/>
            <person name="Gilna P."/>
            <person name="Schmutz J."/>
            <person name="Larimer F."/>
            <person name="Land M."/>
            <person name="Hauser L."/>
            <person name="Kyrpides N."/>
            <person name="Mikhailova N."/>
            <person name="Viollier P."/>
            <person name="Stephens C."/>
            <person name="Richardson P."/>
        </authorList>
    </citation>
    <scope>NUCLEOTIDE SEQUENCE [LARGE SCALE GENOMIC DNA]</scope>
    <source>
        <strain>MCS10</strain>
    </source>
</reference>
<gene>
    <name evidence="1" type="primary">rplK</name>
    <name type="ordered locus">Mmar10_1806</name>
</gene>
<proteinExistence type="inferred from homology"/>
<keyword id="KW-0488">Methylation</keyword>
<keyword id="KW-1185">Reference proteome</keyword>
<keyword id="KW-0687">Ribonucleoprotein</keyword>
<keyword id="KW-0689">Ribosomal protein</keyword>
<keyword id="KW-0694">RNA-binding</keyword>
<keyword id="KW-0699">rRNA-binding</keyword>
<dbReference type="EMBL" id="CP000449">
    <property type="protein sequence ID" value="ABI66098.1"/>
    <property type="molecule type" value="Genomic_DNA"/>
</dbReference>
<dbReference type="RefSeq" id="WP_011643744.1">
    <property type="nucleotide sequence ID" value="NC_008347.1"/>
</dbReference>
<dbReference type="SMR" id="Q0ANN9"/>
<dbReference type="STRING" id="394221.Mmar10_1806"/>
<dbReference type="KEGG" id="mmr:Mmar10_1806"/>
<dbReference type="eggNOG" id="COG0080">
    <property type="taxonomic scope" value="Bacteria"/>
</dbReference>
<dbReference type="HOGENOM" id="CLU_074237_2_0_5"/>
<dbReference type="OrthoDB" id="9802408at2"/>
<dbReference type="Proteomes" id="UP000001964">
    <property type="component" value="Chromosome"/>
</dbReference>
<dbReference type="GO" id="GO:0022625">
    <property type="term" value="C:cytosolic large ribosomal subunit"/>
    <property type="evidence" value="ECO:0007669"/>
    <property type="project" value="TreeGrafter"/>
</dbReference>
<dbReference type="GO" id="GO:0070180">
    <property type="term" value="F:large ribosomal subunit rRNA binding"/>
    <property type="evidence" value="ECO:0007669"/>
    <property type="project" value="UniProtKB-UniRule"/>
</dbReference>
<dbReference type="GO" id="GO:0003735">
    <property type="term" value="F:structural constituent of ribosome"/>
    <property type="evidence" value="ECO:0007669"/>
    <property type="project" value="InterPro"/>
</dbReference>
<dbReference type="GO" id="GO:0006412">
    <property type="term" value="P:translation"/>
    <property type="evidence" value="ECO:0007669"/>
    <property type="project" value="UniProtKB-UniRule"/>
</dbReference>
<dbReference type="CDD" id="cd00349">
    <property type="entry name" value="Ribosomal_L11"/>
    <property type="match status" value="1"/>
</dbReference>
<dbReference type="FunFam" id="1.10.10.250:FF:000001">
    <property type="entry name" value="50S ribosomal protein L11"/>
    <property type="match status" value="1"/>
</dbReference>
<dbReference type="FunFam" id="3.30.1550.10:FF:000001">
    <property type="entry name" value="50S ribosomal protein L11"/>
    <property type="match status" value="1"/>
</dbReference>
<dbReference type="Gene3D" id="1.10.10.250">
    <property type="entry name" value="Ribosomal protein L11, C-terminal domain"/>
    <property type="match status" value="1"/>
</dbReference>
<dbReference type="Gene3D" id="3.30.1550.10">
    <property type="entry name" value="Ribosomal protein L11/L12, N-terminal domain"/>
    <property type="match status" value="1"/>
</dbReference>
<dbReference type="HAMAP" id="MF_00736">
    <property type="entry name" value="Ribosomal_uL11"/>
    <property type="match status" value="1"/>
</dbReference>
<dbReference type="InterPro" id="IPR000911">
    <property type="entry name" value="Ribosomal_uL11"/>
</dbReference>
<dbReference type="InterPro" id="IPR006519">
    <property type="entry name" value="Ribosomal_uL11_bac-typ"/>
</dbReference>
<dbReference type="InterPro" id="IPR020783">
    <property type="entry name" value="Ribosomal_uL11_C"/>
</dbReference>
<dbReference type="InterPro" id="IPR036769">
    <property type="entry name" value="Ribosomal_uL11_C_sf"/>
</dbReference>
<dbReference type="InterPro" id="IPR020785">
    <property type="entry name" value="Ribosomal_uL11_CS"/>
</dbReference>
<dbReference type="InterPro" id="IPR020784">
    <property type="entry name" value="Ribosomal_uL11_N"/>
</dbReference>
<dbReference type="InterPro" id="IPR036796">
    <property type="entry name" value="Ribosomal_uL11_N_sf"/>
</dbReference>
<dbReference type="NCBIfam" id="TIGR01632">
    <property type="entry name" value="L11_bact"/>
    <property type="match status" value="1"/>
</dbReference>
<dbReference type="PANTHER" id="PTHR11661">
    <property type="entry name" value="60S RIBOSOMAL PROTEIN L12"/>
    <property type="match status" value="1"/>
</dbReference>
<dbReference type="PANTHER" id="PTHR11661:SF1">
    <property type="entry name" value="LARGE RIBOSOMAL SUBUNIT PROTEIN UL11M"/>
    <property type="match status" value="1"/>
</dbReference>
<dbReference type="Pfam" id="PF00298">
    <property type="entry name" value="Ribosomal_L11"/>
    <property type="match status" value="1"/>
</dbReference>
<dbReference type="Pfam" id="PF03946">
    <property type="entry name" value="Ribosomal_L11_N"/>
    <property type="match status" value="1"/>
</dbReference>
<dbReference type="SMART" id="SM00649">
    <property type="entry name" value="RL11"/>
    <property type="match status" value="1"/>
</dbReference>
<dbReference type="SUPFAM" id="SSF54747">
    <property type="entry name" value="Ribosomal L11/L12e N-terminal domain"/>
    <property type="match status" value="1"/>
</dbReference>
<dbReference type="SUPFAM" id="SSF46906">
    <property type="entry name" value="Ribosomal protein L11, C-terminal domain"/>
    <property type="match status" value="1"/>
</dbReference>
<dbReference type="PROSITE" id="PS00359">
    <property type="entry name" value="RIBOSOMAL_L11"/>
    <property type="match status" value="1"/>
</dbReference>